<organism>
    <name type="scientific">Parnassia fimbriata</name>
    <name type="common">Fringed grass-of-Parnassus</name>
    <dbReference type="NCBI Taxonomy" id="3797"/>
    <lineage>
        <taxon>Eukaryota</taxon>
        <taxon>Viridiplantae</taxon>
        <taxon>Streptophyta</taxon>
        <taxon>Embryophyta</taxon>
        <taxon>Tracheophyta</taxon>
        <taxon>Spermatophyta</taxon>
        <taxon>Magnoliopsida</taxon>
        <taxon>eudicotyledons</taxon>
        <taxon>Gunneridae</taxon>
        <taxon>Pentapetalae</taxon>
        <taxon>rosids</taxon>
        <taxon>fabids</taxon>
        <taxon>Celastrales</taxon>
        <taxon>Celastraceae</taxon>
        <taxon>Parnassia</taxon>
    </lineage>
</organism>
<name>RBL_PARFI</name>
<proteinExistence type="inferred from homology"/>
<comment type="function">
    <text evidence="1">RuBisCO catalyzes two reactions: the carboxylation of D-ribulose 1,5-bisphosphate, the primary event in carbon dioxide fixation, as well as the oxidative fragmentation of the pentose substrate in the photorespiration process. Both reactions occur simultaneously and in competition at the same active site.</text>
</comment>
<comment type="catalytic activity">
    <reaction evidence="1">
        <text>2 (2R)-3-phosphoglycerate + 2 H(+) = D-ribulose 1,5-bisphosphate + CO2 + H2O</text>
        <dbReference type="Rhea" id="RHEA:23124"/>
        <dbReference type="ChEBI" id="CHEBI:15377"/>
        <dbReference type="ChEBI" id="CHEBI:15378"/>
        <dbReference type="ChEBI" id="CHEBI:16526"/>
        <dbReference type="ChEBI" id="CHEBI:57870"/>
        <dbReference type="ChEBI" id="CHEBI:58272"/>
        <dbReference type="EC" id="4.1.1.39"/>
    </reaction>
</comment>
<comment type="catalytic activity">
    <reaction evidence="1">
        <text>D-ribulose 1,5-bisphosphate + O2 = 2-phosphoglycolate + (2R)-3-phosphoglycerate + 2 H(+)</text>
        <dbReference type="Rhea" id="RHEA:36631"/>
        <dbReference type="ChEBI" id="CHEBI:15378"/>
        <dbReference type="ChEBI" id="CHEBI:15379"/>
        <dbReference type="ChEBI" id="CHEBI:57870"/>
        <dbReference type="ChEBI" id="CHEBI:58033"/>
        <dbReference type="ChEBI" id="CHEBI:58272"/>
    </reaction>
</comment>
<comment type="cofactor">
    <cofactor evidence="1">
        <name>Mg(2+)</name>
        <dbReference type="ChEBI" id="CHEBI:18420"/>
    </cofactor>
    <text evidence="1">Binds 1 Mg(2+) ion per subunit.</text>
</comment>
<comment type="subunit">
    <text evidence="1">Heterohexadecamer of 8 large chains and 8 small chains; disulfide-linked. The disulfide link is formed within the large subunit homodimers.</text>
</comment>
<comment type="subcellular location">
    <subcellularLocation>
        <location>Plastid</location>
        <location>Chloroplast</location>
    </subcellularLocation>
</comment>
<comment type="PTM">
    <text evidence="1">The disulfide bond which can form in the large chain dimeric partners within the hexadecamer appears to be associated with oxidative stress and protein turnover.</text>
</comment>
<comment type="miscellaneous">
    <text evidence="1">The basic functional RuBisCO is composed of a large chain homodimer in a 'head-to-tail' conformation. In form I RuBisCO this homodimer is arranged in a barrel-like tetramer with the small subunits forming a tetrameric 'cap' on each end of the 'barrel'.</text>
</comment>
<comment type="similarity">
    <text evidence="1">Belongs to the RuBisCO large chain family. Type I subfamily.</text>
</comment>
<reference key="1">
    <citation type="journal article" date="1990" name="Proc. Natl. Acad. Sci. U.S.A.">
        <title>rbcL sequence divergence and phylogenetic relationships in Saxifragaceae sensu lato.</title>
        <authorList>
            <person name="Soltis D.E."/>
            <person name="Soltis P.S."/>
            <person name="Clegg M.T."/>
            <person name="Durbin M."/>
        </authorList>
    </citation>
    <scope>NUCLEOTIDE SEQUENCE [GENOMIC DNA]</scope>
</reference>
<reference key="2">
    <citation type="journal article" date="1992" name="Science">
        <title>Carnivorous plants: phylogeny and structural evolution.</title>
        <authorList>
            <person name="Albert V.A."/>
            <person name="Williams S.E."/>
            <person name="Chase M.W."/>
        </authorList>
    </citation>
    <scope>NUCLEOTIDE SEQUENCE [GENOMIC DNA]</scope>
</reference>
<sequence length="459" mass="51036">VGFKAGVKDYKLTYYTPDYETKDTDILAAFRMTPQPGVPPEEAGAAVAAESSTGTWTTVWTDGLTSLDRYKGRCYHIEPVAGEENQYIAYVAYPLDLFEEGSVTNMFTSIVGNVFGFKALRALRLDDLRIPPAYSKTFQGPPHGIQVERDKLNKYGRPLLGCTIKPKLGLSAKNYGRAVYECLRGGLDFTKDDENVNSQPFMRWRDRFLFCAEAIYKAQPETGEIKGHYLNATAGTCEEMIKRAVFARELGVPIVMHDYLTGGFTANTSLAHYCRDNGLLLHIHRAMHAVIDRQKNHGIHFRVLAKALRMSGGDHIHSGTVVGKLEGERDITLGFVDLLRDDFIEKDRSRGIYFTQDWVSLPGVLPVASGGIHVWHMPALTEIFGDDSVLQFGGGTLGHPWGNAPGAVANRVALEACVQARNEGRDLAREGNEIIREPCKWSPELAAACEVWKEIKFEF</sequence>
<geneLocation type="chloroplast"/>
<accession>P28437</accession>
<dbReference type="EC" id="4.1.1.39" evidence="1"/>
<dbReference type="EMBL" id="L01939">
    <property type="protein sequence ID" value="AAA84563.2"/>
    <property type="molecule type" value="Genomic_DNA"/>
</dbReference>
<dbReference type="SMR" id="P28437"/>
<dbReference type="GO" id="GO:0009507">
    <property type="term" value="C:chloroplast"/>
    <property type="evidence" value="ECO:0007669"/>
    <property type="project" value="UniProtKB-SubCell"/>
</dbReference>
<dbReference type="GO" id="GO:0000287">
    <property type="term" value="F:magnesium ion binding"/>
    <property type="evidence" value="ECO:0007669"/>
    <property type="project" value="InterPro"/>
</dbReference>
<dbReference type="GO" id="GO:0004497">
    <property type="term" value="F:monooxygenase activity"/>
    <property type="evidence" value="ECO:0007669"/>
    <property type="project" value="UniProtKB-KW"/>
</dbReference>
<dbReference type="GO" id="GO:0016984">
    <property type="term" value="F:ribulose-bisphosphate carboxylase activity"/>
    <property type="evidence" value="ECO:0007669"/>
    <property type="project" value="UniProtKB-EC"/>
</dbReference>
<dbReference type="GO" id="GO:0009853">
    <property type="term" value="P:photorespiration"/>
    <property type="evidence" value="ECO:0007669"/>
    <property type="project" value="UniProtKB-KW"/>
</dbReference>
<dbReference type="GO" id="GO:0019253">
    <property type="term" value="P:reductive pentose-phosphate cycle"/>
    <property type="evidence" value="ECO:0007669"/>
    <property type="project" value="UniProtKB-KW"/>
</dbReference>
<dbReference type="CDD" id="cd08212">
    <property type="entry name" value="RuBisCO_large_I"/>
    <property type="match status" value="1"/>
</dbReference>
<dbReference type="FunFam" id="3.20.20.110:FF:000001">
    <property type="entry name" value="Ribulose bisphosphate carboxylase large chain"/>
    <property type="match status" value="1"/>
</dbReference>
<dbReference type="FunFam" id="3.30.70.150:FF:000001">
    <property type="entry name" value="Ribulose bisphosphate carboxylase large chain"/>
    <property type="match status" value="1"/>
</dbReference>
<dbReference type="Gene3D" id="3.20.20.110">
    <property type="entry name" value="Ribulose bisphosphate carboxylase, large subunit, C-terminal domain"/>
    <property type="match status" value="1"/>
</dbReference>
<dbReference type="Gene3D" id="3.30.70.150">
    <property type="entry name" value="RuBisCO large subunit, N-terminal domain"/>
    <property type="match status" value="1"/>
</dbReference>
<dbReference type="HAMAP" id="MF_01338">
    <property type="entry name" value="RuBisCO_L_type1"/>
    <property type="match status" value="1"/>
</dbReference>
<dbReference type="InterPro" id="IPR033966">
    <property type="entry name" value="RuBisCO"/>
</dbReference>
<dbReference type="InterPro" id="IPR020878">
    <property type="entry name" value="RuBisCo_large_chain_AS"/>
</dbReference>
<dbReference type="InterPro" id="IPR000685">
    <property type="entry name" value="RuBisCO_lsu_C"/>
</dbReference>
<dbReference type="InterPro" id="IPR036376">
    <property type="entry name" value="RuBisCO_lsu_C_sf"/>
</dbReference>
<dbReference type="InterPro" id="IPR017443">
    <property type="entry name" value="RuBisCO_lsu_fd_N"/>
</dbReference>
<dbReference type="InterPro" id="IPR036422">
    <property type="entry name" value="RuBisCO_lsu_N_sf"/>
</dbReference>
<dbReference type="InterPro" id="IPR020888">
    <property type="entry name" value="RuBisCO_lsuI"/>
</dbReference>
<dbReference type="NCBIfam" id="NF003252">
    <property type="entry name" value="PRK04208.1"/>
    <property type="match status" value="1"/>
</dbReference>
<dbReference type="PANTHER" id="PTHR42704">
    <property type="entry name" value="RIBULOSE BISPHOSPHATE CARBOXYLASE"/>
    <property type="match status" value="1"/>
</dbReference>
<dbReference type="PANTHER" id="PTHR42704:SF15">
    <property type="entry name" value="RIBULOSE BISPHOSPHATE CARBOXYLASE LARGE CHAIN"/>
    <property type="match status" value="1"/>
</dbReference>
<dbReference type="Pfam" id="PF00016">
    <property type="entry name" value="RuBisCO_large"/>
    <property type="match status" value="1"/>
</dbReference>
<dbReference type="Pfam" id="PF02788">
    <property type="entry name" value="RuBisCO_large_N"/>
    <property type="match status" value="1"/>
</dbReference>
<dbReference type="SFLD" id="SFLDG01052">
    <property type="entry name" value="RuBisCO"/>
    <property type="match status" value="1"/>
</dbReference>
<dbReference type="SFLD" id="SFLDS00014">
    <property type="entry name" value="RuBisCO"/>
    <property type="match status" value="1"/>
</dbReference>
<dbReference type="SFLD" id="SFLDG00301">
    <property type="entry name" value="RuBisCO-like_proteins"/>
    <property type="match status" value="1"/>
</dbReference>
<dbReference type="SUPFAM" id="SSF51649">
    <property type="entry name" value="RuBisCo, C-terminal domain"/>
    <property type="match status" value="1"/>
</dbReference>
<dbReference type="SUPFAM" id="SSF54966">
    <property type="entry name" value="RuBisCO, large subunit, small (N-terminal) domain"/>
    <property type="match status" value="1"/>
</dbReference>
<dbReference type="PROSITE" id="PS00157">
    <property type="entry name" value="RUBISCO_LARGE"/>
    <property type="match status" value="1"/>
</dbReference>
<evidence type="ECO:0000255" key="1">
    <source>
        <dbReference type="HAMAP-Rule" id="MF_01338"/>
    </source>
</evidence>
<gene>
    <name evidence="1" type="primary">rbcL</name>
</gene>
<keyword id="KW-0113">Calvin cycle</keyword>
<keyword id="KW-0120">Carbon dioxide fixation</keyword>
<keyword id="KW-0150">Chloroplast</keyword>
<keyword id="KW-1015">Disulfide bond</keyword>
<keyword id="KW-0456">Lyase</keyword>
<keyword id="KW-0460">Magnesium</keyword>
<keyword id="KW-0479">Metal-binding</keyword>
<keyword id="KW-0488">Methylation</keyword>
<keyword id="KW-0503">Monooxygenase</keyword>
<keyword id="KW-0560">Oxidoreductase</keyword>
<keyword id="KW-0601">Photorespiration</keyword>
<keyword id="KW-0602">Photosynthesis</keyword>
<keyword id="KW-0934">Plastid</keyword>
<protein>
    <recommendedName>
        <fullName evidence="1">Ribulose bisphosphate carboxylase large chain</fullName>
        <shortName evidence="1">RuBisCO large subunit</shortName>
        <ecNumber evidence="1">4.1.1.39</ecNumber>
    </recommendedName>
</protein>
<feature type="chain" id="PRO_0000062556" description="Ribulose bisphosphate carboxylase large chain">
    <location>
        <begin position="1" status="less than"/>
        <end position="459" status="greater than"/>
    </location>
</feature>
<feature type="active site" description="Proton acceptor" evidence="1">
    <location>
        <position position="165"/>
    </location>
</feature>
<feature type="active site" description="Proton acceptor" evidence="1">
    <location>
        <position position="284"/>
    </location>
</feature>
<feature type="binding site" description="in homodimeric partner" evidence="1">
    <location>
        <position position="113"/>
    </location>
    <ligand>
        <name>substrate</name>
    </ligand>
</feature>
<feature type="binding site" evidence="1">
    <location>
        <position position="163"/>
    </location>
    <ligand>
        <name>substrate</name>
    </ligand>
</feature>
<feature type="binding site" evidence="1">
    <location>
        <position position="167"/>
    </location>
    <ligand>
        <name>substrate</name>
    </ligand>
</feature>
<feature type="binding site" description="via carbamate group" evidence="1">
    <location>
        <position position="191"/>
    </location>
    <ligand>
        <name>Mg(2+)</name>
        <dbReference type="ChEBI" id="CHEBI:18420"/>
    </ligand>
</feature>
<feature type="binding site" evidence="1">
    <location>
        <position position="193"/>
    </location>
    <ligand>
        <name>Mg(2+)</name>
        <dbReference type="ChEBI" id="CHEBI:18420"/>
    </ligand>
</feature>
<feature type="binding site" evidence="1">
    <location>
        <position position="194"/>
    </location>
    <ligand>
        <name>Mg(2+)</name>
        <dbReference type="ChEBI" id="CHEBI:18420"/>
    </ligand>
</feature>
<feature type="binding site" evidence="1">
    <location>
        <position position="285"/>
    </location>
    <ligand>
        <name>substrate</name>
    </ligand>
</feature>
<feature type="binding site" evidence="1">
    <location>
        <position position="317"/>
    </location>
    <ligand>
        <name>substrate</name>
    </ligand>
</feature>
<feature type="binding site" evidence="1">
    <location>
        <position position="369"/>
    </location>
    <ligand>
        <name>substrate</name>
    </ligand>
</feature>
<feature type="site" description="Transition state stabilizer" evidence="1">
    <location>
        <position position="324"/>
    </location>
</feature>
<feature type="modified residue" description="N6,N6,N6-trimethyllysine" evidence="1">
    <location>
        <position position="4"/>
    </location>
</feature>
<feature type="modified residue" description="N6-carboxylysine" evidence="1">
    <location>
        <position position="191"/>
    </location>
</feature>
<feature type="disulfide bond" description="Interchain; in linked form" evidence="1">
    <location>
        <position position="237"/>
    </location>
</feature>
<feature type="non-terminal residue">
    <location>
        <position position="1"/>
    </location>
</feature>
<feature type="non-terminal residue">
    <location>
        <position position="459"/>
    </location>
</feature>